<evidence type="ECO:0000250" key="1"/>
<evidence type="ECO:0000250" key="2">
    <source>
        <dbReference type="UniProtKB" id="P61073"/>
    </source>
</evidence>
<evidence type="ECO:0000250" key="3">
    <source>
        <dbReference type="UniProtKB" id="P70658"/>
    </source>
</evidence>
<evidence type="ECO:0000255" key="4">
    <source>
        <dbReference type="PROSITE-ProRule" id="PRU00521"/>
    </source>
</evidence>
<evidence type="ECO:0000256" key="5">
    <source>
        <dbReference type="SAM" id="MobiDB-lite"/>
    </source>
</evidence>
<evidence type="ECO:0000305" key="6"/>
<proteinExistence type="evidence at transcript level"/>
<organism>
    <name type="scientific">Chlorocebus aethiops</name>
    <name type="common">Green monkey</name>
    <name type="synonym">Cercopithecus aethiops</name>
    <dbReference type="NCBI Taxonomy" id="9534"/>
    <lineage>
        <taxon>Eukaryota</taxon>
        <taxon>Metazoa</taxon>
        <taxon>Chordata</taxon>
        <taxon>Craniata</taxon>
        <taxon>Vertebrata</taxon>
        <taxon>Euteleostomi</taxon>
        <taxon>Mammalia</taxon>
        <taxon>Eutheria</taxon>
        <taxon>Euarchontoglires</taxon>
        <taxon>Primates</taxon>
        <taxon>Haplorrhini</taxon>
        <taxon>Catarrhini</taxon>
        <taxon>Cercopithecidae</taxon>
        <taxon>Cercopithecinae</taxon>
        <taxon>Chlorocebus</taxon>
    </lineage>
</organism>
<name>CXCR4_CHLAE</name>
<gene>
    <name type="primary">CXCR4</name>
</gene>
<dbReference type="EMBL" id="AF019378">
    <property type="protein sequence ID" value="AAD01638.1"/>
    <property type="molecule type" value="mRNA"/>
</dbReference>
<dbReference type="EMBL" id="AB015943">
    <property type="protein sequence ID" value="BAA31327.1"/>
    <property type="molecule type" value="mRNA"/>
</dbReference>
<dbReference type="SMR" id="Q9TSQ8"/>
<dbReference type="GlyCosmos" id="Q9TSQ8">
    <property type="glycosylation" value="2 sites, No reported glycans"/>
</dbReference>
<dbReference type="GO" id="GO:0070161">
    <property type="term" value="C:anchoring junction"/>
    <property type="evidence" value="ECO:0007669"/>
    <property type="project" value="UniProtKB-SubCell"/>
</dbReference>
<dbReference type="GO" id="GO:0005769">
    <property type="term" value="C:early endosome"/>
    <property type="evidence" value="ECO:0000250"/>
    <property type="project" value="UniProtKB"/>
</dbReference>
<dbReference type="GO" id="GO:0009897">
    <property type="term" value="C:external side of plasma membrane"/>
    <property type="evidence" value="ECO:0007669"/>
    <property type="project" value="TreeGrafter"/>
</dbReference>
<dbReference type="GO" id="GO:0005770">
    <property type="term" value="C:late endosome"/>
    <property type="evidence" value="ECO:0000250"/>
    <property type="project" value="UniProtKB"/>
</dbReference>
<dbReference type="GO" id="GO:0005764">
    <property type="term" value="C:lysosome"/>
    <property type="evidence" value="ECO:0000250"/>
    <property type="project" value="UniProtKB"/>
</dbReference>
<dbReference type="GO" id="GO:0005886">
    <property type="term" value="C:plasma membrane"/>
    <property type="evidence" value="ECO:0000250"/>
    <property type="project" value="UniProtKB"/>
</dbReference>
<dbReference type="GO" id="GO:0019957">
    <property type="term" value="F:C-C chemokine binding"/>
    <property type="evidence" value="ECO:0007669"/>
    <property type="project" value="TreeGrafter"/>
</dbReference>
<dbReference type="GO" id="GO:0016493">
    <property type="term" value="F:C-C chemokine receptor activity"/>
    <property type="evidence" value="ECO:0007669"/>
    <property type="project" value="TreeGrafter"/>
</dbReference>
<dbReference type="GO" id="GO:0038147">
    <property type="term" value="F:C-X-C motif chemokine 12 receptor activity"/>
    <property type="evidence" value="ECO:0000250"/>
    <property type="project" value="UniProtKB"/>
</dbReference>
<dbReference type="GO" id="GO:0007420">
    <property type="term" value="P:brain development"/>
    <property type="evidence" value="ECO:0007669"/>
    <property type="project" value="TreeGrafter"/>
</dbReference>
<dbReference type="GO" id="GO:0019722">
    <property type="term" value="P:calcium-mediated signaling"/>
    <property type="evidence" value="ECO:0007669"/>
    <property type="project" value="TreeGrafter"/>
</dbReference>
<dbReference type="GO" id="GO:0060326">
    <property type="term" value="P:cell chemotaxis"/>
    <property type="evidence" value="ECO:0007669"/>
    <property type="project" value="TreeGrafter"/>
</dbReference>
<dbReference type="GO" id="GO:0071345">
    <property type="term" value="P:cellular response to cytokine stimulus"/>
    <property type="evidence" value="ECO:0000250"/>
    <property type="project" value="UniProtKB"/>
</dbReference>
<dbReference type="GO" id="GO:0038160">
    <property type="term" value="P:CXCL12-activated CXCR4 signaling pathway"/>
    <property type="evidence" value="ECO:0000250"/>
    <property type="project" value="UniProtKB"/>
</dbReference>
<dbReference type="GO" id="GO:0006955">
    <property type="term" value="P:immune response"/>
    <property type="evidence" value="ECO:0007669"/>
    <property type="project" value="TreeGrafter"/>
</dbReference>
<dbReference type="GO" id="GO:0022008">
    <property type="term" value="P:neurogenesis"/>
    <property type="evidence" value="ECO:0007669"/>
    <property type="project" value="TreeGrafter"/>
</dbReference>
<dbReference type="GO" id="GO:0007204">
    <property type="term" value="P:positive regulation of cytosolic calcium ion concentration"/>
    <property type="evidence" value="ECO:0007669"/>
    <property type="project" value="TreeGrafter"/>
</dbReference>
<dbReference type="CDD" id="cd15179">
    <property type="entry name" value="7tmA_CXCR4"/>
    <property type="match status" value="1"/>
</dbReference>
<dbReference type="FunFam" id="1.20.1070.10:FF:000063">
    <property type="entry name" value="C-X-C chemokine receptor type 4"/>
    <property type="match status" value="1"/>
</dbReference>
<dbReference type="Gene3D" id="1.20.1070.10">
    <property type="entry name" value="Rhodopsin 7-helix transmembrane proteins"/>
    <property type="match status" value="1"/>
</dbReference>
<dbReference type="InterPro" id="IPR050119">
    <property type="entry name" value="CCR1-9-like"/>
</dbReference>
<dbReference type="InterPro" id="IPR022726">
    <property type="entry name" value="Chemokine_CXCR4_N_dom"/>
</dbReference>
<dbReference type="InterPro" id="IPR000355">
    <property type="entry name" value="Chemokine_rcpt"/>
</dbReference>
<dbReference type="InterPro" id="IPR001277">
    <property type="entry name" value="CXCR4/ACKR2"/>
</dbReference>
<dbReference type="InterPro" id="IPR000276">
    <property type="entry name" value="GPCR_Rhodpsn"/>
</dbReference>
<dbReference type="InterPro" id="IPR017452">
    <property type="entry name" value="GPCR_Rhodpsn_7TM"/>
</dbReference>
<dbReference type="PANTHER" id="PTHR10489:SF594">
    <property type="entry name" value="C-X-C CHEMOKINE RECEPTOR TYPE 4"/>
    <property type="match status" value="1"/>
</dbReference>
<dbReference type="PANTHER" id="PTHR10489">
    <property type="entry name" value="CELL ADHESION MOLECULE"/>
    <property type="match status" value="1"/>
</dbReference>
<dbReference type="Pfam" id="PF00001">
    <property type="entry name" value="7tm_1"/>
    <property type="match status" value="1"/>
</dbReference>
<dbReference type="Pfam" id="PF12109">
    <property type="entry name" value="CXCR4_N"/>
    <property type="match status" value="1"/>
</dbReference>
<dbReference type="PRINTS" id="PR00657">
    <property type="entry name" value="CCCHEMOKINER"/>
</dbReference>
<dbReference type="PRINTS" id="PR00645">
    <property type="entry name" value="CXCCHMKINER4"/>
</dbReference>
<dbReference type="PRINTS" id="PR00237">
    <property type="entry name" value="GPCRRHODOPSN"/>
</dbReference>
<dbReference type="SUPFAM" id="SSF81321">
    <property type="entry name" value="Family A G protein-coupled receptor-like"/>
    <property type="match status" value="1"/>
</dbReference>
<dbReference type="PROSITE" id="PS00237">
    <property type="entry name" value="G_PROTEIN_RECEP_F1_1"/>
    <property type="match status" value="1"/>
</dbReference>
<dbReference type="PROSITE" id="PS50262">
    <property type="entry name" value="G_PROTEIN_RECEP_F1_2"/>
    <property type="match status" value="1"/>
</dbReference>
<comment type="function">
    <text evidence="2 3">Receptor for the C-X-C chemokine CXCL12/SDF-1 that transduces a signal by increasing intracellular calcium ion levels and enhancing MAPK1/MAPK3 activation. Involved in the AKT signaling cascade (By similarity). Plays a role in regulation of cell migration, e.g. during wound healing. Acts as a receptor for extracellular ubiquitin; leading to enhanced intracellular calcium ions and reduced cellular cAMP levels. Binds bacterial lipopolysaccharide (LPS) et mediates LPS-induced inflammatory response, including TNF secretion by monocytes (By similarity). Involved in hematopoiesis and in cardiac ventricular septum formation. Also plays an essential role in vascularization of the gastrointestinal tract, probably by regulating vascular branching and/or remodeling processes in endothelial cells. Involved in cerebellar development. In the CNS, could mediate hippocampal-neuron survival (By similarity).</text>
</comment>
<comment type="subunit">
    <text evidence="2">Monomer. Can form homodimers. Interacts with CD164. Interacts with ARRB2; the interaction is dependent on the C-terminal phosphorylation of CXCR4 and allows activation of MAPK1 and MAPK3. Interacts with ARR3; the interaction is dependent on the C-terminal phosphorylation of CXCR4 and modulates calcium mobilization. Interacts with RNF113A; the interaction, enhanced by CXCL12, promotes CXCR4 ubiquitination and subsequent degradation. Interacts (via the cytoplasmic C-terminal) with ITCH (via the WW domains I and II); the interaction, enhanced by CXCL12, promotes CXCR4 ubiquitination and leads to its degradation. Interacts with extracellular ubiquitin. Interacts with DBN1; this interaction is enhanced by antigenic stimulation. Following LPS binding, may form a complex with GDF5, HSP90AA1 and HSPA8.</text>
</comment>
<comment type="subcellular location">
    <subcellularLocation>
        <location evidence="2">Cell membrane</location>
        <topology evidence="2">Multi-pass membrane protein</topology>
    </subcellularLocation>
    <subcellularLocation>
        <location evidence="1">Cell junction</location>
    </subcellularLocation>
    <subcellularLocation>
        <location evidence="1">Early endosome</location>
    </subcellularLocation>
    <subcellularLocation>
        <location evidence="1">Late endosome</location>
    </subcellularLocation>
    <subcellularLocation>
        <location evidence="1">Lysosome</location>
    </subcellularLocation>
    <text evidence="1">In unstimulated cells, diffuse pattern on plasma membrane. On agonist stimulation, colocalizes with ITCH at the plasma membrane where it becomes ubiquitinated (By similarity). In the presence of antigen, distributes to the immunological synapse forming at the T-cell-APC contact area, where it localizes at the peripheral and distal supramolecular activation cluster (SMAC) (By similarity).</text>
</comment>
<comment type="PTM">
    <text evidence="2">Phosphorylated on agonist stimulation. Rapidly phosphorylated on serine and threonine residues in the C-terminal. Phosphorylation at Ser-324 and Ser-325 leads to recruitment of ITCH, ubiquitination and protein degradation.</text>
</comment>
<comment type="PTM">
    <text evidence="2">Ubiquitinated after ligand binding, leading to its degradation. Ubiquitinated by ITCH at the cell membrane on agonist stimulation. The ubiquitin-dependent mechanism, endosomal sorting complex required for transport (ESCRT), then targets CXCR4 for lysosomal degradation. This process is dependent also on prior Ser-/Thr-phosphorylation in the C-terminal of CXCR4. Also binding of ARRB1 to STAM negatively regulates CXCR4 sorting to lysosomes though modulating ubiquitination of SFR5S.</text>
</comment>
<comment type="PTM">
    <text evidence="2">Sulfation is required for efficient binding of CXCL12/SDF-1alpha and promotes its dimerization.</text>
</comment>
<comment type="PTM">
    <text evidence="2">O- and N-glycosylated. N-glycosylation can mask coreceptor function. The O-glycosylation chondroitin sulfate attachment does not affect interaction with CXCL12/SDF-1alpha nor its coreceptor activity.</text>
</comment>
<comment type="similarity">
    <text evidence="4">Belongs to the G-protein coupled receptor 1 family.</text>
</comment>
<accession>Q9TSQ8</accession>
<accession>O77488</accession>
<feature type="chain" id="PRO_0000247978" description="C-X-C chemokine receptor type 4">
    <location>
        <begin position="1"/>
        <end position="352"/>
    </location>
</feature>
<feature type="topological domain" description="Extracellular" evidence="6">
    <location>
        <begin position="1"/>
        <end position="38"/>
    </location>
</feature>
<feature type="transmembrane region" description="Helical; Name=1" evidence="2">
    <location>
        <begin position="39"/>
        <end position="63"/>
    </location>
</feature>
<feature type="topological domain" description="Cytoplasmic" evidence="6">
    <location>
        <begin position="64"/>
        <end position="77"/>
    </location>
</feature>
<feature type="transmembrane region" description="Helical; Name=2" evidence="2">
    <location>
        <begin position="78"/>
        <end position="99"/>
    </location>
</feature>
<feature type="topological domain" description="Extracellular" evidence="6">
    <location>
        <begin position="100"/>
        <end position="110"/>
    </location>
</feature>
<feature type="transmembrane region" description="Helical; Name=3" evidence="2">
    <location>
        <begin position="111"/>
        <end position="130"/>
    </location>
</feature>
<feature type="topological domain" description="Cytoplasmic" evidence="6">
    <location>
        <begin position="131"/>
        <end position="154"/>
    </location>
</feature>
<feature type="transmembrane region" description="Helical; Name=4" evidence="2">
    <location>
        <begin position="155"/>
        <end position="174"/>
    </location>
</feature>
<feature type="topological domain" description="Extracellular" evidence="6">
    <location>
        <begin position="175"/>
        <end position="195"/>
    </location>
</feature>
<feature type="transmembrane region" description="Helical; Name=5" evidence="2">
    <location>
        <begin position="196"/>
        <end position="216"/>
    </location>
</feature>
<feature type="topological domain" description="Cytoplasmic" evidence="6">
    <location>
        <begin position="217"/>
        <end position="241"/>
    </location>
</feature>
<feature type="transmembrane region" description="Helical; Name=6" evidence="2">
    <location>
        <begin position="242"/>
        <end position="261"/>
    </location>
</feature>
<feature type="topological domain" description="Extracellular" evidence="6">
    <location>
        <begin position="262"/>
        <end position="282"/>
    </location>
</feature>
<feature type="transmembrane region" description="Helical; Name=7" evidence="2">
    <location>
        <begin position="283"/>
        <end position="302"/>
    </location>
</feature>
<feature type="topological domain" description="Cytoplasmic" evidence="6">
    <location>
        <begin position="303"/>
        <end position="352"/>
    </location>
</feature>
<feature type="region of interest" description="Important for chemokine binding and signaling" evidence="1">
    <location>
        <begin position="1"/>
        <end position="21"/>
    </location>
</feature>
<feature type="region of interest" description="Chemokine binding" evidence="1">
    <location>
        <begin position="94"/>
        <end position="97"/>
    </location>
</feature>
<feature type="region of interest" description="Chemokine binding" evidence="1">
    <location>
        <begin position="113"/>
        <end position="117"/>
    </location>
</feature>
<feature type="region of interest" description="Involved in dimerization; when bound to chemokine" evidence="1">
    <location>
        <begin position="135"/>
        <end position="147"/>
    </location>
</feature>
<feature type="region of interest" description="Chemokine binding, important for signaling" evidence="1">
    <location>
        <begin position="186"/>
        <end position="190"/>
    </location>
</feature>
<feature type="region of interest" description="Involved in dimerization" evidence="1">
    <location>
        <begin position="191"/>
        <end position="210"/>
    </location>
</feature>
<feature type="region of interest" description="Involved in dimerization" evidence="1">
    <location>
        <begin position="266"/>
        <end position="268"/>
    </location>
</feature>
<feature type="region of interest" description="Disordered" evidence="5">
    <location>
        <begin position="329"/>
        <end position="352"/>
    </location>
</feature>
<feature type="short sequence motif" description="Important for signaling" evidence="1">
    <location>
        <begin position="133"/>
        <end position="135"/>
    </location>
</feature>
<feature type="compositionally biased region" description="Low complexity" evidence="5">
    <location>
        <begin position="337"/>
        <end position="352"/>
    </location>
</feature>
<feature type="site" description="Chemokine" evidence="1">
    <location>
        <position position="171"/>
    </location>
</feature>
<feature type="site" description="Chemokine" evidence="1">
    <location>
        <position position="288"/>
    </location>
</feature>
<feature type="modified residue" description="Sulfotyrosine" evidence="2">
    <location>
        <position position="7"/>
    </location>
</feature>
<feature type="modified residue" description="Sulfotyrosine" evidence="2">
    <location>
        <position position="12"/>
    </location>
</feature>
<feature type="modified residue" description="Sulfotyrosine" evidence="2">
    <location>
        <position position="21"/>
    </location>
</feature>
<feature type="modified residue" description="Phosphoserine" evidence="2">
    <location>
        <position position="319"/>
    </location>
</feature>
<feature type="modified residue" description="Phosphoserine" evidence="2">
    <location>
        <position position="321"/>
    </location>
</feature>
<feature type="modified residue" description="Phosphoserine; by PKC and GRK6" evidence="2">
    <location>
        <position position="324"/>
    </location>
</feature>
<feature type="modified residue" description="Phosphoserine; by PKC and GRK6" evidence="2">
    <location>
        <position position="325"/>
    </location>
</feature>
<feature type="modified residue" description="Phosphoserine; by GRK6" evidence="2">
    <location>
        <position position="330"/>
    </location>
</feature>
<feature type="modified residue" description="Phosphoserine; by GRK6" evidence="2">
    <location>
        <position position="339"/>
    </location>
</feature>
<feature type="modified residue" description="Phosphoserine" evidence="2">
    <location>
        <position position="348"/>
    </location>
</feature>
<feature type="modified residue" description="Phosphoserine" evidence="2">
    <location>
        <position position="351"/>
    </location>
</feature>
<feature type="glycosylation site" description="N-linked (GlcNAc...) asparagine" evidence="1">
    <location>
        <position position="11"/>
    </location>
</feature>
<feature type="glycosylation site" description="O-linked (Xyl...) (chondroitin sulfate) serine" evidence="2">
    <location>
        <position position="18"/>
    </location>
</feature>
<feature type="disulfide bond" evidence="4">
    <location>
        <begin position="28"/>
        <end position="274"/>
    </location>
</feature>
<feature type="disulfide bond" evidence="4">
    <location>
        <begin position="109"/>
        <end position="186"/>
    </location>
</feature>
<feature type="cross-link" description="Glycyl lysine isopeptide (Lys-Gly) (interchain with G-Cter in ubiquitin)" evidence="2">
    <location>
        <position position="331"/>
    </location>
</feature>
<feature type="sequence conflict" description="In Ref. 2; BAA31327." evidence="6" ref="2">
    <original>K</original>
    <variation>R</variation>
    <location>
        <position position="146"/>
    </location>
</feature>
<feature type="sequence conflict" description="In Ref. 2; BAA31327." evidence="6" ref="2">
    <original>D</original>
    <variation>H</variation>
    <location>
        <position position="171"/>
    </location>
</feature>
<feature type="sequence conflict" description="In Ref. 2; BAA31327." evidence="6" ref="2">
    <original>G</original>
    <variation>R</variation>
    <location>
        <position position="235"/>
    </location>
</feature>
<protein>
    <recommendedName>
        <fullName>C-X-C chemokine receptor type 4</fullName>
        <shortName>CXC-R4</shortName>
        <shortName>CXCR-4</shortName>
    </recommendedName>
    <cdAntigenName>CD184</cdAntigenName>
</protein>
<reference key="1">
    <citation type="submission" date="1997-08" db="EMBL/GenBank/DDBJ databases">
        <title>CXCR4 from African green monkey.</title>
        <authorList>
            <person name="Holtkamp N."/>
            <person name="Baier M."/>
            <person name="Werner A."/>
        </authorList>
    </citation>
    <scope>NUCLEOTIDE SEQUENCE [MRNA]</scope>
</reference>
<reference key="2">
    <citation type="submission" date="1998-07" db="EMBL/GenBank/DDBJ databases">
        <title>cDNA sequence of African green monkey CXCR-4 chemokine receptor gene.</title>
        <authorList>
            <person name="Murayama Y."/>
            <person name="Matsunaga S."/>
            <person name="Inoue-Murayama M."/>
        </authorList>
    </citation>
    <scope>NUCLEOTIDE SEQUENCE [MRNA]</scope>
</reference>
<sequence>MEGISIYTSDNYTEEMGSGDYDSIKEPCFREENAHFNRIFLPTIYSIIFLTGIVGNGLVILVMGYQKKLRSMTDKYRLHLSVADLLFVITLPFWAVDAVANWYFGNFLCKAVHVIYTVNLYSSVLILAFISLDRYLAIVHATNSQKPRKLLAEKVVYVGVWIPALLLTIPDFIFASVSEADDRYICDRFYPNDLWVVVFQFQHIMVGLILPGIVILSCYCIIISKLSHSKGHQKGKALKTTVILILAFFACWLPYYIGISIDSFILLEIIKQGCEFENTVHKWISITEALAFFHCCLNPILYAFLGAKFKTSAQHALTSVSRGSSLKILSKGKRGGHSSVSTESESSSFHSS</sequence>
<keyword id="KW-0965">Cell junction</keyword>
<keyword id="KW-1003">Cell membrane</keyword>
<keyword id="KW-1015">Disulfide bond</keyword>
<keyword id="KW-0967">Endosome</keyword>
<keyword id="KW-0297">G-protein coupled receptor</keyword>
<keyword id="KW-0325">Glycoprotein</keyword>
<keyword id="KW-1017">Isopeptide bond</keyword>
<keyword id="KW-0458">Lysosome</keyword>
<keyword id="KW-0472">Membrane</keyword>
<keyword id="KW-0597">Phosphoprotein</keyword>
<keyword id="KW-0654">Proteoglycan</keyword>
<keyword id="KW-0675">Receptor</keyword>
<keyword id="KW-0765">Sulfation</keyword>
<keyword id="KW-0807">Transducer</keyword>
<keyword id="KW-0812">Transmembrane</keyword>
<keyword id="KW-1133">Transmembrane helix</keyword>
<keyword id="KW-0832">Ubl conjugation</keyword>